<comment type="function">
    <text evidence="1">Transfers the 4'-phosphopantetheine moiety from coenzyme A to a Ser of acyl-carrier-protein.</text>
</comment>
<comment type="catalytic activity">
    <reaction evidence="1">
        <text>apo-[ACP] + CoA = holo-[ACP] + adenosine 3',5'-bisphosphate + H(+)</text>
        <dbReference type="Rhea" id="RHEA:12068"/>
        <dbReference type="Rhea" id="RHEA-COMP:9685"/>
        <dbReference type="Rhea" id="RHEA-COMP:9690"/>
        <dbReference type="ChEBI" id="CHEBI:15378"/>
        <dbReference type="ChEBI" id="CHEBI:29999"/>
        <dbReference type="ChEBI" id="CHEBI:57287"/>
        <dbReference type="ChEBI" id="CHEBI:58343"/>
        <dbReference type="ChEBI" id="CHEBI:64479"/>
        <dbReference type="EC" id="2.7.8.7"/>
    </reaction>
</comment>
<comment type="cofactor">
    <cofactor evidence="1">
        <name>Mg(2+)</name>
        <dbReference type="ChEBI" id="CHEBI:18420"/>
    </cofactor>
</comment>
<comment type="subcellular location">
    <subcellularLocation>
        <location evidence="1">Cytoplasm</location>
    </subcellularLocation>
</comment>
<comment type="similarity">
    <text evidence="1">Belongs to the P-Pant transferase superfamily. AcpS family.</text>
</comment>
<dbReference type="EC" id="2.7.8.7" evidence="1"/>
<dbReference type="EMBL" id="CP000924">
    <property type="protein sequence ID" value="ABY94150.1"/>
    <property type="molecule type" value="Genomic_DNA"/>
</dbReference>
<dbReference type="RefSeq" id="WP_003867467.1">
    <property type="nucleotide sequence ID" value="NC_010321.1"/>
</dbReference>
<dbReference type="SMR" id="B0KD52"/>
<dbReference type="STRING" id="340099.Teth39_0484"/>
<dbReference type="KEGG" id="tpd:Teth39_0484"/>
<dbReference type="eggNOG" id="COG0736">
    <property type="taxonomic scope" value="Bacteria"/>
</dbReference>
<dbReference type="HOGENOM" id="CLU_089696_0_2_9"/>
<dbReference type="Proteomes" id="UP000002156">
    <property type="component" value="Chromosome"/>
</dbReference>
<dbReference type="GO" id="GO:0005737">
    <property type="term" value="C:cytoplasm"/>
    <property type="evidence" value="ECO:0007669"/>
    <property type="project" value="UniProtKB-SubCell"/>
</dbReference>
<dbReference type="GO" id="GO:0008897">
    <property type="term" value="F:holo-[acyl-carrier-protein] synthase activity"/>
    <property type="evidence" value="ECO:0007669"/>
    <property type="project" value="UniProtKB-UniRule"/>
</dbReference>
<dbReference type="GO" id="GO:0000287">
    <property type="term" value="F:magnesium ion binding"/>
    <property type="evidence" value="ECO:0007669"/>
    <property type="project" value="UniProtKB-UniRule"/>
</dbReference>
<dbReference type="GO" id="GO:0006633">
    <property type="term" value="P:fatty acid biosynthetic process"/>
    <property type="evidence" value="ECO:0007669"/>
    <property type="project" value="UniProtKB-UniRule"/>
</dbReference>
<dbReference type="Gene3D" id="3.90.470.20">
    <property type="entry name" value="4'-phosphopantetheinyl transferase domain"/>
    <property type="match status" value="1"/>
</dbReference>
<dbReference type="HAMAP" id="MF_00101">
    <property type="entry name" value="AcpS"/>
    <property type="match status" value="1"/>
</dbReference>
<dbReference type="InterPro" id="IPR008278">
    <property type="entry name" value="4-PPantetheinyl_Trfase_dom"/>
</dbReference>
<dbReference type="InterPro" id="IPR037143">
    <property type="entry name" value="4-PPantetheinyl_Trfase_dom_sf"/>
</dbReference>
<dbReference type="InterPro" id="IPR002582">
    <property type="entry name" value="ACPS"/>
</dbReference>
<dbReference type="InterPro" id="IPR004568">
    <property type="entry name" value="Ppantetheine-prot_Trfase_dom"/>
</dbReference>
<dbReference type="NCBIfam" id="TIGR00516">
    <property type="entry name" value="acpS"/>
    <property type="match status" value="1"/>
</dbReference>
<dbReference type="NCBIfam" id="TIGR00556">
    <property type="entry name" value="pantethn_trn"/>
    <property type="match status" value="1"/>
</dbReference>
<dbReference type="Pfam" id="PF01648">
    <property type="entry name" value="ACPS"/>
    <property type="match status" value="1"/>
</dbReference>
<dbReference type="SUPFAM" id="SSF56214">
    <property type="entry name" value="4'-phosphopantetheinyl transferase"/>
    <property type="match status" value="1"/>
</dbReference>
<feature type="chain" id="PRO_1000093924" description="Holo-[acyl-carrier-protein] synthase">
    <location>
        <begin position="1"/>
        <end position="138"/>
    </location>
</feature>
<feature type="binding site" evidence="1">
    <location>
        <position position="8"/>
    </location>
    <ligand>
        <name>Mg(2+)</name>
        <dbReference type="ChEBI" id="CHEBI:18420"/>
    </ligand>
</feature>
<feature type="binding site" evidence="1">
    <location>
        <position position="56"/>
    </location>
    <ligand>
        <name>Mg(2+)</name>
        <dbReference type="ChEBI" id="CHEBI:18420"/>
    </ligand>
</feature>
<keyword id="KW-0963">Cytoplasm</keyword>
<keyword id="KW-0275">Fatty acid biosynthesis</keyword>
<keyword id="KW-0276">Fatty acid metabolism</keyword>
<keyword id="KW-0444">Lipid biosynthesis</keyword>
<keyword id="KW-0443">Lipid metabolism</keyword>
<keyword id="KW-0460">Magnesium</keyword>
<keyword id="KW-0479">Metal-binding</keyword>
<keyword id="KW-1185">Reference proteome</keyword>
<keyword id="KW-0808">Transferase</keyword>
<reference key="1">
    <citation type="submission" date="2008-01" db="EMBL/GenBank/DDBJ databases">
        <title>Complete sequence of Thermoanaerobacter pseudethanolicus 39E.</title>
        <authorList>
            <person name="Copeland A."/>
            <person name="Lucas S."/>
            <person name="Lapidus A."/>
            <person name="Barry K."/>
            <person name="Glavina del Rio T."/>
            <person name="Dalin E."/>
            <person name="Tice H."/>
            <person name="Pitluck S."/>
            <person name="Bruce D."/>
            <person name="Goodwin L."/>
            <person name="Saunders E."/>
            <person name="Brettin T."/>
            <person name="Detter J.C."/>
            <person name="Han C."/>
            <person name="Schmutz J."/>
            <person name="Larimer F."/>
            <person name="Land M."/>
            <person name="Hauser L."/>
            <person name="Kyrpides N."/>
            <person name="Lykidis A."/>
            <person name="Hemme C."/>
            <person name="Fields M.W."/>
            <person name="He Z."/>
            <person name="Zhou J."/>
            <person name="Richardson P."/>
        </authorList>
    </citation>
    <scope>NUCLEOTIDE SEQUENCE [LARGE SCALE GENOMIC DNA]</scope>
    <source>
        <strain>ATCC 33223 / DSM 2355 / 39E</strain>
    </source>
</reference>
<accession>B0KD52</accession>
<sequence>MELFVGTDIVEVERIKKAFDANSKFLERLFTQKEIEYFNSKRMKLPHIAGFFSAKESISKVLGTGISGFSWKDIEICHDEKGAPAVILKGKAKNIADKKGIRDIKLSISHTKTYAISCAIAIGGEKNDSADLKTDERS</sequence>
<proteinExistence type="inferred from homology"/>
<gene>
    <name evidence="1" type="primary">acpS</name>
    <name type="ordered locus">Teth39_0484</name>
</gene>
<protein>
    <recommendedName>
        <fullName evidence="1">Holo-[acyl-carrier-protein] synthase</fullName>
        <shortName evidence="1">Holo-ACP synthase</shortName>
        <ecNumber evidence="1">2.7.8.7</ecNumber>
    </recommendedName>
    <alternativeName>
        <fullName evidence="1">4'-phosphopantetheinyl transferase AcpS</fullName>
    </alternativeName>
</protein>
<name>ACPS_THEP3</name>
<organism>
    <name type="scientific">Thermoanaerobacter pseudethanolicus (strain ATCC 33223 / 39E)</name>
    <name type="common">Clostridium thermohydrosulfuricum</name>
    <dbReference type="NCBI Taxonomy" id="340099"/>
    <lineage>
        <taxon>Bacteria</taxon>
        <taxon>Bacillati</taxon>
        <taxon>Bacillota</taxon>
        <taxon>Clostridia</taxon>
        <taxon>Thermoanaerobacterales</taxon>
        <taxon>Thermoanaerobacteraceae</taxon>
        <taxon>Thermoanaerobacter</taxon>
    </lineage>
</organism>
<evidence type="ECO:0000255" key="1">
    <source>
        <dbReference type="HAMAP-Rule" id="MF_00101"/>
    </source>
</evidence>